<evidence type="ECO:0000255" key="1">
    <source>
        <dbReference type="HAMAP-Rule" id="MF_00080"/>
    </source>
</evidence>
<evidence type="ECO:0000256" key="2">
    <source>
        <dbReference type="SAM" id="MobiDB-lite"/>
    </source>
</evidence>
<name>IF3_MYCBO</name>
<sequence>MSTETRVNERIRVPEVRLIGPGGEQVGIVRIEDALRVAADADLDLVEVAPNARPPVCKIMDYGKYKYEAAQKARESRRNQQQTVVKEQKLRPKIDDHDYETKKGHVVRFLEAGSKVKVTIMFRGREQSRPELGYRLLQRLGADVADYGFIETSAKQDGRNMTMVLAPHRGAKTRARARHPGEPAGGPPPKPTAGDSKAAPN</sequence>
<gene>
    <name evidence="1" type="primary">infC</name>
    <name type="ordered locus">BQ2027_MB1668</name>
</gene>
<protein>
    <recommendedName>
        <fullName evidence="1">Translation initiation factor IF-3</fullName>
    </recommendedName>
</protein>
<reference key="1">
    <citation type="journal article" date="2003" name="Proc. Natl. Acad. Sci. U.S.A.">
        <title>The complete genome sequence of Mycobacterium bovis.</title>
        <authorList>
            <person name="Garnier T."/>
            <person name="Eiglmeier K."/>
            <person name="Camus J.-C."/>
            <person name="Medina N."/>
            <person name="Mansoor H."/>
            <person name="Pryor M."/>
            <person name="Duthoy S."/>
            <person name="Grondin S."/>
            <person name="Lacroix C."/>
            <person name="Monsempe C."/>
            <person name="Simon S."/>
            <person name="Harris B."/>
            <person name="Atkin R."/>
            <person name="Doggett J."/>
            <person name="Mayes R."/>
            <person name="Keating L."/>
            <person name="Wheeler P.R."/>
            <person name="Parkhill J."/>
            <person name="Barrell B.G."/>
            <person name="Cole S.T."/>
            <person name="Gordon S.V."/>
            <person name="Hewinson R.G."/>
        </authorList>
    </citation>
    <scope>NUCLEOTIDE SEQUENCE [LARGE SCALE GENOMIC DNA]</scope>
    <source>
        <strain>ATCC BAA-935 / AF2122/97</strain>
    </source>
</reference>
<reference key="2">
    <citation type="journal article" date="2017" name="Genome Announc.">
        <title>Updated reference genome sequence and annotation of Mycobacterium bovis AF2122/97.</title>
        <authorList>
            <person name="Malone K.M."/>
            <person name="Farrell D."/>
            <person name="Stuber T.P."/>
            <person name="Schubert O.T."/>
            <person name="Aebersold R."/>
            <person name="Robbe-Austerman S."/>
            <person name="Gordon S.V."/>
        </authorList>
    </citation>
    <scope>NUCLEOTIDE SEQUENCE [LARGE SCALE GENOMIC DNA]</scope>
    <scope>GENOME REANNOTATION</scope>
    <source>
        <strain>ATCC BAA-935 / AF2122/97</strain>
    </source>
</reference>
<accession>P65136</accession>
<accession>A0A1R3XYW8</accession>
<accession>P94975</accession>
<accession>X2BI20</accession>
<organism>
    <name type="scientific">Mycobacterium bovis (strain ATCC BAA-935 / AF2122/97)</name>
    <dbReference type="NCBI Taxonomy" id="233413"/>
    <lineage>
        <taxon>Bacteria</taxon>
        <taxon>Bacillati</taxon>
        <taxon>Actinomycetota</taxon>
        <taxon>Actinomycetes</taxon>
        <taxon>Mycobacteriales</taxon>
        <taxon>Mycobacteriaceae</taxon>
        <taxon>Mycobacterium</taxon>
        <taxon>Mycobacterium tuberculosis complex</taxon>
    </lineage>
</organism>
<keyword id="KW-0963">Cytoplasm</keyword>
<keyword id="KW-0396">Initiation factor</keyword>
<keyword id="KW-0648">Protein biosynthesis</keyword>
<keyword id="KW-1185">Reference proteome</keyword>
<comment type="function">
    <text evidence="1">IF-3 binds to the 30S ribosomal subunit and shifts the equilibrium between 70S ribosomes and their 50S and 30S subunits in favor of the free subunits, thus enhancing the availability of 30S subunits on which protein synthesis initiation begins.</text>
</comment>
<comment type="subunit">
    <text evidence="1">Monomer.</text>
</comment>
<comment type="subcellular location">
    <subcellularLocation>
        <location evidence="1">Cytoplasm</location>
    </subcellularLocation>
</comment>
<comment type="similarity">
    <text evidence="1">Belongs to the IF-3 family.</text>
</comment>
<dbReference type="EMBL" id="LT708304">
    <property type="protein sequence ID" value="SIU00272.1"/>
    <property type="molecule type" value="Genomic_DNA"/>
</dbReference>
<dbReference type="RefSeq" id="NP_855321.1">
    <property type="nucleotide sequence ID" value="NC_002945.3"/>
</dbReference>
<dbReference type="RefSeq" id="WP_003901217.1">
    <property type="nucleotide sequence ID" value="NC_002945.4"/>
</dbReference>
<dbReference type="SMR" id="P65136"/>
<dbReference type="GeneID" id="45425611"/>
<dbReference type="KEGG" id="mbo:BQ2027_MB1668"/>
<dbReference type="PATRIC" id="fig|233413.5.peg.1821"/>
<dbReference type="Proteomes" id="UP000001419">
    <property type="component" value="Chromosome"/>
</dbReference>
<dbReference type="GO" id="GO:0005829">
    <property type="term" value="C:cytosol"/>
    <property type="evidence" value="ECO:0007669"/>
    <property type="project" value="TreeGrafter"/>
</dbReference>
<dbReference type="GO" id="GO:0016020">
    <property type="term" value="C:membrane"/>
    <property type="evidence" value="ECO:0007669"/>
    <property type="project" value="TreeGrafter"/>
</dbReference>
<dbReference type="GO" id="GO:0043022">
    <property type="term" value="F:ribosome binding"/>
    <property type="evidence" value="ECO:0007669"/>
    <property type="project" value="TreeGrafter"/>
</dbReference>
<dbReference type="GO" id="GO:0003743">
    <property type="term" value="F:translation initiation factor activity"/>
    <property type="evidence" value="ECO:0007669"/>
    <property type="project" value="UniProtKB-UniRule"/>
</dbReference>
<dbReference type="GO" id="GO:0032790">
    <property type="term" value="P:ribosome disassembly"/>
    <property type="evidence" value="ECO:0007669"/>
    <property type="project" value="TreeGrafter"/>
</dbReference>
<dbReference type="FunFam" id="3.10.20.80:FF:000001">
    <property type="entry name" value="Translation initiation factor IF-3"/>
    <property type="match status" value="1"/>
</dbReference>
<dbReference type="FunFam" id="3.30.110.10:FF:000002">
    <property type="entry name" value="Translation initiation factor IF-3"/>
    <property type="match status" value="1"/>
</dbReference>
<dbReference type="Gene3D" id="3.30.110.10">
    <property type="entry name" value="Translation initiation factor 3 (IF-3), C-terminal domain"/>
    <property type="match status" value="1"/>
</dbReference>
<dbReference type="Gene3D" id="3.10.20.80">
    <property type="entry name" value="Translation initiation factor 3 (IF-3), N-terminal domain"/>
    <property type="match status" value="1"/>
</dbReference>
<dbReference type="HAMAP" id="MF_00080">
    <property type="entry name" value="IF_3"/>
    <property type="match status" value="1"/>
</dbReference>
<dbReference type="InterPro" id="IPR036788">
    <property type="entry name" value="T_IF-3_C_sf"/>
</dbReference>
<dbReference type="InterPro" id="IPR036787">
    <property type="entry name" value="T_IF-3_N_sf"/>
</dbReference>
<dbReference type="InterPro" id="IPR019813">
    <property type="entry name" value="Translation_initiation_fac3_CS"/>
</dbReference>
<dbReference type="InterPro" id="IPR001288">
    <property type="entry name" value="Translation_initiation_fac_3"/>
</dbReference>
<dbReference type="InterPro" id="IPR019815">
    <property type="entry name" value="Translation_initiation_fac_3_C"/>
</dbReference>
<dbReference type="InterPro" id="IPR019814">
    <property type="entry name" value="Translation_initiation_fac_3_N"/>
</dbReference>
<dbReference type="NCBIfam" id="TIGR00168">
    <property type="entry name" value="infC"/>
    <property type="match status" value="1"/>
</dbReference>
<dbReference type="PANTHER" id="PTHR10938">
    <property type="entry name" value="TRANSLATION INITIATION FACTOR IF-3"/>
    <property type="match status" value="1"/>
</dbReference>
<dbReference type="PANTHER" id="PTHR10938:SF0">
    <property type="entry name" value="TRANSLATION INITIATION FACTOR IF-3, MITOCHONDRIAL"/>
    <property type="match status" value="1"/>
</dbReference>
<dbReference type="Pfam" id="PF00707">
    <property type="entry name" value="IF3_C"/>
    <property type="match status" value="1"/>
</dbReference>
<dbReference type="Pfam" id="PF05198">
    <property type="entry name" value="IF3_N"/>
    <property type="match status" value="1"/>
</dbReference>
<dbReference type="SUPFAM" id="SSF55200">
    <property type="entry name" value="Translation initiation factor IF3, C-terminal domain"/>
    <property type="match status" value="1"/>
</dbReference>
<dbReference type="SUPFAM" id="SSF54364">
    <property type="entry name" value="Translation initiation factor IF3, N-terminal domain"/>
    <property type="match status" value="1"/>
</dbReference>
<dbReference type="PROSITE" id="PS00938">
    <property type="entry name" value="IF3"/>
    <property type="match status" value="1"/>
</dbReference>
<feature type="chain" id="PRO_0000177539" description="Translation initiation factor IF-3">
    <location>
        <begin position="1"/>
        <end position="201"/>
    </location>
</feature>
<feature type="region of interest" description="Disordered" evidence="2">
    <location>
        <begin position="167"/>
        <end position="201"/>
    </location>
</feature>
<feature type="compositionally biased region" description="Basic residues" evidence="2">
    <location>
        <begin position="169"/>
        <end position="178"/>
    </location>
</feature>
<proteinExistence type="inferred from homology"/>